<comment type="function">
    <text evidence="1">Converts the aldose L-fucose into the corresponding ketose L-fuculose.</text>
</comment>
<comment type="catalytic activity">
    <reaction evidence="1">
        <text>L-fucose = L-fuculose</text>
        <dbReference type="Rhea" id="RHEA:17233"/>
        <dbReference type="ChEBI" id="CHEBI:2181"/>
        <dbReference type="ChEBI" id="CHEBI:17617"/>
        <dbReference type="EC" id="5.3.1.25"/>
    </reaction>
</comment>
<comment type="cofactor">
    <cofactor evidence="1">
        <name>Mn(2+)</name>
        <dbReference type="ChEBI" id="CHEBI:29035"/>
    </cofactor>
</comment>
<comment type="pathway">
    <text evidence="1">Carbohydrate degradation; L-fucose degradation; L-lactaldehyde and glycerone phosphate from L-fucose: step 1/3.</text>
</comment>
<comment type="subunit">
    <text evidence="1">Homohexamer.</text>
</comment>
<comment type="subcellular location">
    <subcellularLocation>
        <location evidence="1">Cytoplasm</location>
    </subcellularLocation>
</comment>
<comment type="similarity">
    <text evidence="1">Belongs to the L-fucose isomerase family.</text>
</comment>
<comment type="sequence caution" evidence="2">
    <conflict type="erroneous termination">
        <sequence resource="EMBL-CDS" id="AAO70440"/>
    </conflict>
    <text>Truncated C-terminus. However, it could be a natural mutation leading to a slightly truncated protein.</text>
</comment>
<comment type="sequence caution" evidence="2">
    <conflict type="erroneous termination">
        <sequence resource="EMBL-CDS" id="CAD02802"/>
    </conflict>
    <text>Truncated C-terminus. However, it could be a natural mutation leading to a slightly truncated protein.</text>
</comment>
<sequence>MKKISLPKIGIRPVIDGRRMGVRESLEEQTMNMAKATAALITEKIRHACGAQVECVIADTCIAGMAESAACEEKFSSQNVGVTITVTPCWCYGSETIDMDPMRPKAIWGFNGTERPGAVYLAAALAAHSQKGIPAFSIYGHDVQDADDTSIPADVEEKLLRFARAGLAVASMKGKSYLSVGGVSMGIAGSIVDHNFFESWLGMKVQAVDMTELRRRIDQKIYDEAELEMALAWADKNFRYGEDQNASQYKRNEAQNRAVLKESLLMAMCIRDMMQGNKTLADKGLVEESLGYNAIAAGFQGQRHWTDQYPNGDTAEALLNSSFDWNGVREPFVVATENDSLNGVAMLFGHQLTGTAQIFADVRTYWSPEAVERVTGQALSALAEHGIIHLINSGSAALDGACKQRDSEGKPTMKPHWEISQQEADACLAATEWCPAIHEYFRGGGYSSRFLTEGGVPFTMTRVNIIKGLGPVLQIAEGWSVELPKAMHDQLDARTNSTWPTTWFAPRLIGKGPFTDVYSVMANWGANHGVLTIGHVGADFITLAAMLRIPVCMHNVEEAKIYRPSAWAAHGMDIEGQDYRACQNYGPLYKR</sequence>
<protein>
    <recommendedName>
        <fullName evidence="1">L-fucose isomerase</fullName>
        <ecNumber evidence="1">5.3.1.25</ecNumber>
    </recommendedName>
    <alternativeName>
        <fullName evidence="1">6-deoxy-L-galactose isomerase</fullName>
    </alternativeName>
    <alternativeName>
        <fullName>FucIase</fullName>
    </alternativeName>
</protein>
<gene>
    <name evidence="1" type="primary">fucI</name>
    <name type="ordered locus">STY3116</name>
    <name type="ordered locus">t2884</name>
</gene>
<reference key="1">
    <citation type="journal article" date="2001" name="Nature">
        <title>Complete genome sequence of a multiple drug resistant Salmonella enterica serovar Typhi CT18.</title>
        <authorList>
            <person name="Parkhill J."/>
            <person name="Dougan G."/>
            <person name="James K.D."/>
            <person name="Thomson N.R."/>
            <person name="Pickard D."/>
            <person name="Wain J."/>
            <person name="Churcher C.M."/>
            <person name="Mungall K.L."/>
            <person name="Bentley S.D."/>
            <person name="Holden M.T.G."/>
            <person name="Sebaihia M."/>
            <person name="Baker S."/>
            <person name="Basham D."/>
            <person name="Brooks K."/>
            <person name="Chillingworth T."/>
            <person name="Connerton P."/>
            <person name="Cronin A."/>
            <person name="Davis P."/>
            <person name="Davies R.M."/>
            <person name="Dowd L."/>
            <person name="White N."/>
            <person name="Farrar J."/>
            <person name="Feltwell T."/>
            <person name="Hamlin N."/>
            <person name="Haque A."/>
            <person name="Hien T.T."/>
            <person name="Holroyd S."/>
            <person name="Jagels K."/>
            <person name="Krogh A."/>
            <person name="Larsen T.S."/>
            <person name="Leather S."/>
            <person name="Moule S."/>
            <person name="O'Gaora P."/>
            <person name="Parry C."/>
            <person name="Quail M.A."/>
            <person name="Rutherford K.M."/>
            <person name="Simmonds M."/>
            <person name="Skelton J."/>
            <person name="Stevens K."/>
            <person name="Whitehead S."/>
            <person name="Barrell B.G."/>
        </authorList>
    </citation>
    <scope>NUCLEOTIDE SEQUENCE [LARGE SCALE GENOMIC DNA]</scope>
    <source>
        <strain>CT18</strain>
    </source>
</reference>
<reference key="2">
    <citation type="journal article" date="2003" name="J. Bacteriol.">
        <title>Comparative genomics of Salmonella enterica serovar Typhi strains Ty2 and CT18.</title>
        <authorList>
            <person name="Deng W."/>
            <person name="Liou S.-R."/>
            <person name="Plunkett G. III"/>
            <person name="Mayhew G.F."/>
            <person name="Rose D.J."/>
            <person name="Burland V."/>
            <person name="Kodoyianni V."/>
            <person name="Schwartz D.C."/>
            <person name="Blattner F.R."/>
        </authorList>
    </citation>
    <scope>NUCLEOTIDE SEQUENCE [LARGE SCALE GENOMIC DNA]</scope>
    <source>
        <strain>ATCC 700931 / Ty2</strain>
    </source>
</reference>
<organism>
    <name type="scientific">Salmonella typhi</name>
    <dbReference type="NCBI Taxonomy" id="90370"/>
    <lineage>
        <taxon>Bacteria</taxon>
        <taxon>Pseudomonadati</taxon>
        <taxon>Pseudomonadota</taxon>
        <taxon>Gammaproteobacteria</taxon>
        <taxon>Enterobacterales</taxon>
        <taxon>Enterobacteriaceae</taxon>
        <taxon>Salmonella</taxon>
    </lineage>
</organism>
<proteinExistence type="inferred from homology"/>
<dbReference type="EC" id="5.3.1.25" evidence="1"/>
<dbReference type="EMBL" id="AL513382">
    <property type="protein sequence ID" value="CAD02802.1"/>
    <property type="status" value="ALT_SEQ"/>
    <property type="molecule type" value="Genomic_DNA"/>
</dbReference>
<dbReference type="EMBL" id="AE014613">
    <property type="protein sequence ID" value="AAO70440.1"/>
    <property type="status" value="ALT_SEQ"/>
    <property type="molecule type" value="Genomic_DNA"/>
</dbReference>
<dbReference type="RefSeq" id="NP_457371.1">
    <property type="nucleotide sequence ID" value="NC_003198.1"/>
</dbReference>
<dbReference type="SMR" id="Q8Z429"/>
<dbReference type="STRING" id="220341.gene:17587000"/>
<dbReference type="KEGG" id="stt:t2884"/>
<dbReference type="KEGG" id="sty:STY3116"/>
<dbReference type="PATRIC" id="fig|220341.7.peg.3171"/>
<dbReference type="eggNOG" id="COG2407">
    <property type="taxonomic scope" value="Bacteria"/>
</dbReference>
<dbReference type="HOGENOM" id="CLU_033326_1_0_6"/>
<dbReference type="OMA" id="NHGAISY"/>
<dbReference type="UniPathway" id="UPA00563">
    <property type="reaction ID" value="UER00624"/>
</dbReference>
<dbReference type="Proteomes" id="UP000000541">
    <property type="component" value="Chromosome"/>
</dbReference>
<dbReference type="Proteomes" id="UP000002670">
    <property type="component" value="Chromosome"/>
</dbReference>
<dbReference type="GO" id="GO:0005737">
    <property type="term" value="C:cytoplasm"/>
    <property type="evidence" value="ECO:0007669"/>
    <property type="project" value="UniProtKB-SubCell"/>
</dbReference>
<dbReference type="GO" id="GO:0008790">
    <property type="term" value="F:arabinose isomerase activity"/>
    <property type="evidence" value="ECO:0007669"/>
    <property type="project" value="TreeGrafter"/>
</dbReference>
<dbReference type="GO" id="GO:0008736">
    <property type="term" value="F:L-fucose isomerase activity"/>
    <property type="evidence" value="ECO:0007669"/>
    <property type="project" value="UniProtKB-UniRule"/>
</dbReference>
<dbReference type="GO" id="GO:0030145">
    <property type="term" value="F:manganese ion binding"/>
    <property type="evidence" value="ECO:0007669"/>
    <property type="project" value="UniProtKB-UniRule"/>
</dbReference>
<dbReference type="GO" id="GO:0019571">
    <property type="term" value="P:D-arabinose catabolic process"/>
    <property type="evidence" value="ECO:0007669"/>
    <property type="project" value="TreeGrafter"/>
</dbReference>
<dbReference type="GO" id="GO:0042355">
    <property type="term" value="P:L-fucose catabolic process"/>
    <property type="evidence" value="ECO:0007669"/>
    <property type="project" value="UniProtKB-UniRule"/>
</dbReference>
<dbReference type="FunFam" id="3.20.14.10:FF:000001">
    <property type="entry name" value="L-fucose isomerase"/>
    <property type="match status" value="1"/>
</dbReference>
<dbReference type="FunFam" id="3.40.275.10:FF:000001">
    <property type="entry name" value="L-fucose isomerase"/>
    <property type="match status" value="1"/>
</dbReference>
<dbReference type="FunFam" id="3.40.50.1070:FF:000001">
    <property type="entry name" value="L-fucose isomerase"/>
    <property type="match status" value="1"/>
</dbReference>
<dbReference type="Gene3D" id="3.40.50.1070">
    <property type="match status" value="1"/>
</dbReference>
<dbReference type="Gene3D" id="3.40.275.10">
    <property type="entry name" value="L-fucose Isomerase, Chain A, domain 2"/>
    <property type="match status" value="1"/>
</dbReference>
<dbReference type="Gene3D" id="3.20.14.10">
    <property type="entry name" value="L-fucose/L-arabinose isomerase, C-terminal"/>
    <property type="match status" value="1"/>
</dbReference>
<dbReference type="HAMAP" id="MF_01254">
    <property type="entry name" value="Fucose_iso"/>
    <property type="match status" value="1"/>
</dbReference>
<dbReference type="InterPro" id="IPR004216">
    <property type="entry name" value="Fuc/Ara_isomerase_C"/>
</dbReference>
<dbReference type="InterPro" id="IPR038393">
    <property type="entry name" value="Fuc_iso_dom3_sf"/>
</dbReference>
<dbReference type="InterPro" id="IPR015888">
    <property type="entry name" value="Fuc_isomerase_C"/>
</dbReference>
<dbReference type="InterPro" id="IPR038391">
    <property type="entry name" value="Fucose_iso_dom1_sf"/>
</dbReference>
<dbReference type="InterPro" id="IPR012888">
    <property type="entry name" value="Fucose_iso_N1"/>
</dbReference>
<dbReference type="InterPro" id="IPR005763">
    <property type="entry name" value="Fucose_isomerase"/>
</dbReference>
<dbReference type="InterPro" id="IPR038392">
    <property type="entry name" value="Fucose_isomerase_dom2_sf"/>
</dbReference>
<dbReference type="InterPro" id="IPR009015">
    <property type="entry name" value="Fucose_isomerase_N/cen_sf"/>
</dbReference>
<dbReference type="InterPro" id="IPR012889">
    <property type="entry name" value="Fucose_isomerase_N2"/>
</dbReference>
<dbReference type="NCBIfam" id="TIGR01089">
    <property type="entry name" value="fucI"/>
    <property type="match status" value="1"/>
</dbReference>
<dbReference type="NCBIfam" id="NF008220">
    <property type="entry name" value="PRK10991.1"/>
    <property type="match status" value="1"/>
</dbReference>
<dbReference type="PANTHER" id="PTHR37840">
    <property type="entry name" value="L-FUCOSE ISOMERASE"/>
    <property type="match status" value="1"/>
</dbReference>
<dbReference type="PANTHER" id="PTHR37840:SF1">
    <property type="entry name" value="L-FUCOSE ISOMERASE"/>
    <property type="match status" value="1"/>
</dbReference>
<dbReference type="Pfam" id="PF02952">
    <property type="entry name" value="Fucose_iso_C"/>
    <property type="match status" value="1"/>
</dbReference>
<dbReference type="Pfam" id="PF07881">
    <property type="entry name" value="Fucose_iso_N1"/>
    <property type="match status" value="1"/>
</dbReference>
<dbReference type="Pfam" id="PF07882">
    <property type="entry name" value="Fucose_iso_N2"/>
    <property type="match status" value="1"/>
</dbReference>
<dbReference type="SUPFAM" id="SSF50443">
    <property type="entry name" value="FucI/AraA C-terminal domain-like"/>
    <property type="match status" value="1"/>
</dbReference>
<dbReference type="SUPFAM" id="SSF53743">
    <property type="entry name" value="FucI/AraA N-terminal and middle domains"/>
    <property type="match status" value="1"/>
</dbReference>
<evidence type="ECO:0000255" key="1">
    <source>
        <dbReference type="HAMAP-Rule" id="MF_01254"/>
    </source>
</evidence>
<evidence type="ECO:0000305" key="2"/>
<accession>Q8Z429</accession>
<accession>Q7C7H4</accession>
<name>FUCI_SALTI</name>
<keyword id="KW-0119">Carbohydrate metabolism</keyword>
<keyword id="KW-0963">Cytoplasm</keyword>
<keyword id="KW-0294">Fucose metabolism</keyword>
<keyword id="KW-0413">Isomerase</keyword>
<keyword id="KW-0464">Manganese</keyword>
<keyword id="KW-0479">Metal-binding</keyword>
<feature type="chain" id="PRO_0000204149" description="L-fucose isomerase">
    <location>
        <begin position="1"/>
        <end position="591"/>
    </location>
</feature>
<feature type="active site" description="Proton acceptor" evidence="1">
    <location>
        <position position="337"/>
    </location>
</feature>
<feature type="active site" description="Proton acceptor" evidence="1">
    <location>
        <position position="361"/>
    </location>
</feature>
<feature type="binding site" evidence="1">
    <location>
        <position position="337"/>
    </location>
    <ligand>
        <name>Mn(2+)</name>
        <dbReference type="ChEBI" id="CHEBI:29035"/>
    </ligand>
</feature>
<feature type="binding site" evidence="1">
    <location>
        <position position="361"/>
    </location>
    <ligand>
        <name>Mn(2+)</name>
        <dbReference type="ChEBI" id="CHEBI:29035"/>
    </ligand>
</feature>
<feature type="binding site" evidence="1">
    <location>
        <position position="528"/>
    </location>
    <ligand>
        <name>Mn(2+)</name>
        <dbReference type="ChEBI" id="CHEBI:29035"/>
    </ligand>
</feature>